<gene>
    <name evidence="11" type="primary">ama-1</name>
    <name evidence="11" type="synonym">rpb-1</name>
    <name evidence="11" type="ORF">F36A4.7</name>
</gene>
<feature type="chain" id="PRO_0000073935" description="DNA-directed RNA polymerase II subunit RPB1">
    <location>
        <begin position="1"/>
        <end position="1856"/>
    </location>
</feature>
<feature type="repeat" description="1">
    <location>
        <begin position="1593"/>
        <end position="1599"/>
    </location>
</feature>
<feature type="repeat" description="2">
    <location>
        <begin position="1600"/>
        <end position="1606"/>
    </location>
</feature>
<feature type="repeat" description="3">
    <location>
        <begin position="1616"/>
        <end position="1622"/>
    </location>
</feature>
<feature type="repeat" description="4">
    <location>
        <begin position="1623"/>
        <end position="1629"/>
    </location>
</feature>
<feature type="repeat" description="5">
    <location>
        <begin position="1630"/>
        <end position="1636"/>
    </location>
</feature>
<feature type="repeat" description="6">
    <location>
        <begin position="1637"/>
        <end position="1643"/>
    </location>
</feature>
<feature type="repeat" description="7">
    <location>
        <begin position="1644"/>
        <end position="1650"/>
    </location>
</feature>
<feature type="repeat" description="8">
    <location>
        <begin position="1651"/>
        <end position="1657"/>
    </location>
</feature>
<feature type="repeat" description="9">
    <location>
        <begin position="1658"/>
        <end position="1664"/>
    </location>
</feature>
<feature type="repeat" description="10">
    <location>
        <begin position="1665"/>
        <end position="1671"/>
    </location>
</feature>
<feature type="repeat" description="11">
    <location>
        <begin position="1672"/>
        <end position="1678"/>
    </location>
</feature>
<feature type="repeat" description="12">
    <location>
        <begin position="1679"/>
        <end position="1685"/>
    </location>
</feature>
<feature type="repeat" description="13">
    <location>
        <begin position="1686"/>
        <end position="1692"/>
    </location>
</feature>
<feature type="repeat" description="14">
    <location>
        <begin position="1693"/>
        <end position="1699"/>
    </location>
</feature>
<feature type="repeat" description="15">
    <location>
        <begin position="1700"/>
        <end position="1706"/>
    </location>
</feature>
<feature type="repeat" description="16">
    <location>
        <begin position="1707"/>
        <end position="1713"/>
    </location>
</feature>
<feature type="repeat" description="17">
    <location>
        <begin position="1720"/>
        <end position="1726"/>
    </location>
</feature>
<feature type="repeat" description="18">
    <location>
        <begin position="1727"/>
        <end position="1733"/>
    </location>
</feature>
<feature type="repeat" description="19">
    <location>
        <begin position="1734"/>
        <end position="1740"/>
    </location>
</feature>
<feature type="repeat" description="20">
    <location>
        <begin position="1741"/>
        <end position="1747"/>
    </location>
</feature>
<feature type="repeat" description="21">
    <location>
        <begin position="1748"/>
        <end position="1754"/>
    </location>
</feature>
<feature type="repeat" description="22">
    <location>
        <begin position="1755"/>
        <end position="1761"/>
    </location>
</feature>
<feature type="repeat" description="23">
    <location>
        <begin position="1769"/>
        <end position="1775"/>
    </location>
</feature>
<feature type="repeat" description="24">
    <location>
        <begin position="1782"/>
        <end position="1788"/>
    </location>
</feature>
<feature type="repeat" description="25">
    <location>
        <begin position="1789"/>
        <end position="1795"/>
    </location>
</feature>
<feature type="repeat" description="26">
    <location>
        <begin position="1796"/>
        <end position="1802"/>
    </location>
</feature>
<feature type="repeat" description="27">
    <location>
        <begin position="1803"/>
        <end position="1809"/>
    </location>
</feature>
<feature type="repeat" description="28; approximate">
    <location>
        <begin position="1810"/>
        <end position="1816"/>
    </location>
</feature>
<feature type="region of interest" description="Lid loop">
    <location>
        <begin position="256"/>
        <end position="268"/>
    </location>
</feature>
<feature type="region of interest" description="Rudder loop">
    <location>
        <begin position="314"/>
        <end position="331"/>
    </location>
</feature>
<feature type="region of interest" description="Bridging helix">
    <location>
        <begin position="827"/>
        <end position="839"/>
    </location>
</feature>
<feature type="region of interest" description="Disordered" evidence="3">
    <location>
        <begin position="1523"/>
        <end position="1856"/>
    </location>
</feature>
<feature type="region of interest" description="C-terminal domain (CTD); 28 X 7 AA approximate tandem repeats of Y-[ST]-P-[ST]-S-P-[AGKNQRST]">
    <location>
        <begin position="1593"/>
        <end position="1816"/>
    </location>
</feature>
<feature type="compositionally biased region" description="Low complexity" evidence="3">
    <location>
        <begin position="1587"/>
        <end position="1856"/>
    </location>
</feature>
<feature type="binding site" evidence="1">
    <location>
        <position position="66"/>
    </location>
    <ligand>
        <name>Zn(2+)</name>
        <dbReference type="ChEBI" id="CHEBI:29105"/>
        <label>1</label>
    </ligand>
</feature>
<feature type="binding site" evidence="1">
    <location>
        <position position="69"/>
    </location>
    <ligand>
        <name>Zn(2+)</name>
        <dbReference type="ChEBI" id="CHEBI:29105"/>
        <label>1</label>
    </ligand>
</feature>
<feature type="binding site" evidence="1">
    <location>
        <position position="76"/>
    </location>
    <ligand>
        <name>Zn(2+)</name>
        <dbReference type="ChEBI" id="CHEBI:29105"/>
        <label>1</label>
    </ligand>
</feature>
<feature type="binding site" evidence="1">
    <location>
        <position position="79"/>
    </location>
    <ligand>
        <name>Zn(2+)</name>
        <dbReference type="ChEBI" id="CHEBI:29105"/>
        <label>1</label>
    </ligand>
</feature>
<feature type="binding site" evidence="1">
    <location>
        <position position="106"/>
    </location>
    <ligand>
        <name>Zn(2+)</name>
        <dbReference type="ChEBI" id="CHEBI:29105"/>
        <label>2</label>
    </ligand>
</feature>
<feature type="binding site" evidence="1">
    <location>
        <position position="109"/>
    </location>
    <ligand>
        <name>Zn(2+)</name>
        <dbReference type="ChEBI" id="CHEBI:29105"/>
        <label>2</label>
    </ligand>
</feature>
<feature type="binding site" evidence="1">
    <location>
        <position position="149"/>
    </location>
    <ligand>
        <name>Zn(2+)</name>
        <dbReference type="ChEBI" id="CHEBI:29105"/>
        <label>2</label>
    </ligand>
</feature>
<feature type="binding site" evidence="1">
    <location>
        <position position="177"/>
    </location>
    <ligand>
        <name>Zn(2+)</name>
        <dbReference type="ChEBI" id="CHEBI:29105"/>
        <label>2</label>
    </ligand>
</feature>
<feature type="binding site" evidence="1">
    <location>
        <position position="489"/>
    </location>
    <ligand>
        <name>Mg(2+)</name>
        <dbReference type="ChEBI" id="CHEBI:18420"/>
        <label>1</label>
        <note>catalytic</note>
    </ligand>
</feature>
<feature type="binding site" evidence="1">
    <location>
        <position position="489"/>
    </location>
    <ligand>
        <name>Mg(2+)</name>
        <dbReference type="ChEBI" id="CHEBI:18420"/>
        <label>2</label>
        <note>ligand shared with RPB2</note>
    </ligand>
</feature>
<feature type="binding site" evidence="1">
    <location>
        <position position="491"/>
    </location>
    <ligand>
        <name>Mg(2+)</name>
        <dbReference type="ChEBI" id="CHEBI:18420"/>
        <label>1</label>
        <note>catalytic</note>
    </ligand>
</feature>
<feature type="binding site" evidence="1">
    <location>
        <position position="491"/>
    </location>
    <ligand>
        <name>Mg(2+)</name>
        <dbReference type="ChEBI" id="CHEBI:18420"/>
        <label>2</label>
        <note>ligand shared with RPB2</note>
    </ligand>
</feature>
<feature type="binding site" evidence="1">
    <location>
        <position position="493"/>
    </location>
    <ligand>
        <name>Mg(2+)</name>
        <dbReference type="ChEBI" id="CHEBI:18420"/>
        <label>1</label>
        <note>catalytic</note>
    </ligand>
</feature>
<feature type="cross-link" description="Glycyl lysine isopeptide (Lys-Gly) (interchain with G-Cter in ubiquitin)" evidence="1">
    <location>
        <position position="1260"/>
    </location>
</feature>
<feature type="sequence conflict" description="In Ref. 1; AAA28126." evidence="10" ref="1">
    <original>V</original>
    <variation>D</variation>
    <location>
        <position position="215"/>
    </location>
</feature>
<feature type="sequence conflict" description="In Ref. 1; AAA28126." evidence="10" ref="1">
    <location>
        <begin position="412"/>
        <end position="415"/>
    </location>
</feature>
<feature type="sequence conflict" description="In Ref. 1; AAA28126." evidence="10" ref="1">
    <original>R</original>
    <variation>RVSVAQNAIKL</variation>
    <location>
        <position position="915"/>
    </location>
</feature>
<feature type="sequence conflict" description="In Ref. 1; AAA28126." evidence="10" ref="1">
    <original>I</original>
    <variation>D</variation>
    <location>
        <position position="963"/>
    </location>
</feature>
<feature type="sequence conflict" description="In Ref. 1; AAA28126." evidence="10" ref="1">
    <original>Q</original>
    <variation>L</variation>
    <location>
        <position position="978"/>
    </location>
</feature>
<feature type="sequence conflict" description="In Ref. 1; AAA28126." evidence="10" ref="1">
    <original>KP</original>
    <variation>NA</variation>
    <location>
        <begin position="994"/>
        <end position="995"/>
    </location>
</feature>
<feature type="sequence conflict" description="In Ref. 1; AAA28126." evidence="10" ref="1">
    <location>
        <begin position="1160"/>
        <end position="1162"/>
    </location>
</feature>
<feature type="sequence conflict" description="In Ref. 1; AAA28126." evidence="10" ref="1">
    <original>IT</original>
    <variation>YS</variation>
    <location>
        <begin position="1406"/>
        <end position="1407"/>
    </location>
</feature>
<accession>P16356</accession>
<accession>Q20090</accession>
<evidence type="ECO:0000250" key="1">
    <source>
        <dbReference type="UniProtKB" id="P04050"/>
    </source>
</evidence>
<evidence type="ECO:0000250" key="2">
    <source>
        <dbReference type="UniProtKB" id="P24928"/>
    </source>
</evidence>
<evidence type="ECO:0000256" key="3">
    <source>
        <dbReference type="SAM" id="MobiDB-lite"/>
    </source>
</evidence>
<evidence type="ECO:0000269" key="4">
    <source>
    </source>
</evidence>
<evidence type="ECO:0000269" key="5">
    <source>
    </source>
</evidence>
<evidence type="ECO:0000269" key="6">
    <source>
    </source>
</evidence>
<evidence type="ECO:0000269" key="7">
    <source>
    </source>
</evidence>
<evidence type="ECO:0000269" key="8">
    <source>
    </source>
</evidence>
<evidence type="ECO:0000303" key="9">
    <source>
    </source>
</evidence>
<evidence type="ECO:0000305" key="10"/>
<evidence type="ECO:0000312" key="11">
    <source>
        <dbReference type="WormBase" id="F36A4.7"/>
    </source>
</evidence>
<dbReference type="EC" id="2.7.7.6"/>
<dbReference type="EMBL" id="M29235">
    <property type="protein sequence ID" value="AAA28126.1"/>
    <property type="molecule type" value="mRNA"/>
</dbReference>
<dbReference type="EMBL" id="BX284604">
    <property type="protein sequence ID" value="CCD69532.1"/>
    <property type="molecule type" value="Genomic_DNA"/>
</dbReference>
<dbReference type="PIR" id="A34092">
    <property type="entry name" value="A34092"/>
</dbReference>
<dbReference type="PIR" id="T29959">
    <property type="entry name" value="T29959"/>
</dbReference>
<dbReference type="RefSeq" id="NP_500523.4">
    <property type="nucleotide sequence ID" value="NM_068122.6"/>
</dbReference>
<dbReference type="SMR" id="P16356"/>
<dbReference type="BioGRID" id="42323">
    <property type="interactions" value="39"/>
</dbReference>
<dbReference type="FunCoup" id="P16356">
    <property type="interactions" value="2921"/>
</dbReference>
<dbReference type="IntAct" id="P16356">
    <property type="interactions" value="5"/>
</dbReference>
<dbReference type="STRING" id="6239.F36A4.7.2"/>
<dbReference type="iPTMnet" id="P16356"/>
<dbReference type="PaxDb" id="6239-F36A4.7"/>
<dbReference type="PeptideAtlas" id="P16356"/>
<dbReference type="EnsemblMetazoa" id="F36A4.7.1">
    <property type="protein sequence ID" value="F36A4.7.1"/>
    <property type="gene ID" value="WBGene00000123"/>
</dbReference>
<dbReference type="GeneID" id="177190"/>
<dbReference type="KEGG" id="cel:CELE_F36A4.7"/>
<dbReference type="UCSC" id="F36A4.7">
    <property type="organism name" value="c. elegans"/>
</dbReference>
<dbReference type="AGR" id="WB:WBGene00000123"/>
<dbReference type="CTD" id="247749"/>
<dbReference type="WormBase" id="F36A4.7">
    <property type="protein sequence ID" value="CE46402"/>
    <property type="gene ID" value="WBGene00000123"/>
    <property type="gene designation" value="ama-1"/>
</dbReference>
<dbReference type="eggNOG" id="KOG0260">
    <property type="taxonomic scope" value="Eukaryota"/>
</dbReference>
<dbReference type="GeneTree" id="ENSGT00930000151033"/>
<dbReference type="HOGENOM" id="CLU_000487_0_2_1"/>
<dbReference type="InParanoid" id="P16356"/>
<dbReference type="OMA" id="KPCMGIV"/>
<dbReference type="OrthoDB" id="270392at2759"/>
<dbReference type="PhylomeDB" id="P16356"/>
<dbReference type="Reactome" id="R-CEL-112382">
    <property type="pathway name" value="Formation of RNA Pol II elongation complex"/>
</dbReference>
<dbReference type="Reactome" id="R-CEL-113418">
    <property type="pathway name" value="Formation of the Early Elongation Complex"/>
</dbReference>
<dbReference type="Reactome" id="R-CEL-5578749">
    <property type="pathway name" value="Transcriptional regulation by small RNAs"/>
</dbReference>
<dbReference type="Reactome" id="R-CEL-674695">
    <property type="pathway name" value="RNA Polymerase II Pre-transcription Events"/>
</dbReference>
<dbReference type="Reactome" id="R-CEL-6781823">
    <property type="pathway name" value="Formation of TC-NER Pre-Incision Complex"/>
</dbReference>
<dbReference type="Reactome" id="R-CEL-6782135">
    <property type="pathway name" value="Dual incision in TC-NER"/>
</dbReference>
<dbReference type="Reactome" id="R-CEL-6782210">
    <property type="pathway name" value="Gap-filling DNA repair synthesis and ligation in TC-NER"/>
</dbReference>
<dbReference type="Reactome" id="R-CEL-6796648">
    <property type="pathway name" value="TP53 Regulates Transcription of DNA Repair Genes"/>
</dbReference>
<dbReference type="Reactome" id="R-CEL-6803529">
    <property type="pathway name" value="FGFR2 alternative splicing"/>
</dbReference>
<dbReference type="Reactome" id="R-CEL-6807505">
    <property type="pathway name" value="RNA polymerase II transcribes snRNA genes"/>
</dbReference>
<dbReference type="Reactome" id="R-CEL-72086">
    <property type="pathway name" value="mRNA Capping"/>
</dbReference>
<dbReference type="Reactome" id="R-CEL-72163">
    <property type="pathway name" value="mRNA Splicing - Major Pathway"/>
</dbReference>
<dbReference type="Reactome" id="R-CEL-72165">
    <property type="pathway name" value="mRNA Splicing - Minor Pathway"/>
</dbReference>
<dbReference type="Reactome" id="R-CEL-72203">
    <property type="pathway name" value="Processing of Capped Intron-Containing Pre-mRNA"/>
</dbReference>
<dbReference type="Reactome" id="R-CEL-73776">
    <property type="pathway name" value="RNA Polymerase II Promoter Escape"/>
</dbReference>
<dbReference type="Reactome" id="R-CEL-73779">
    <property type="pathway name" value="RNA Polymerase II Transcription Pre-Initiation And Promoter Opening"/>
</dbReference>
<dbReference type="Reactome" id="R-CEL-75953">
    <property type="pathway name" value="RNA Polymerase II Transcription Initiation"/>
</dbReference>
<dbReference type="Reactome" id="R-CEL-75955">
    <property type="pathway name" value="RNA Polymerase II Transcription Elongation"/>
</dbReference>
<dbReference type="Reactome" id="R-CEL-76042">
    <property type="pathway name" value="RNA Polymerase II Transcription Initiation And Promoter Clearance"/>
</dbReference>
<dbReference type="Reactome" id="R-CEL-77075">
    <property type="pathway name" value="RNA Pol II CTD phosphorylation and interaction with CE"/>
</dbReference>
<dbReference type="Reactome" id="R-CEL-9018519">
    <property type="pathway name" value="Estrogen-dependent gene expression"/>
</dbReference>
<dbReference type="PRO" id="PR:P16356"/>
<dbReference type="Proteomes" id="UP000001940">
    <property type="component" value="Chromosome IV"/>
</dbReference>
<dbReference type="Bgee" id="WBGene00000123">
    <property type="expression patterns" value="Expressed in embryo and 7 other cell types or tissues"/>
</dbReference>
<dbReference type="GO" id="GO:0005694">
    <property type="term" value="C:chromosome"/>
    <property type="evidence" value="ECO:0000314"/>
    <property type="project" value="UniProtKB"/>
</dbReference>
<dbReference type="GO" id="GO:0000791">
    <property type="term" value="C:euchromatin"/>
    <property type="evidence" value="ECO:0000314"/>
    <property type="project" value="UniProtKB"/>
</dbReference>
<dbReference type="GO" id="GO:0005739">
    <property type="term" value="C:mitochondrion"/>
    <property type="evidence" value="ECO:0007669"/>
    <property type="project" value="GOC"/>
</dbReference>
<dbReference type="GO" id="GO:0016604">
    <property type="term" value="C:nuclear body"/>
    <property type="evidence" value="ECO:0000314"/>
    <property type="project" value="UniProtKB"/>
</dbReference>
<dbReference type="GO" id="GO:0005634">
    <property type="term" value="C:nucleus"/>
    <property type="evidence" value="ECO:0000314"/>
    <property type="project" value="WormBase"/>
</dbReference>
<dbReference type="GO" id="GO:0005665">
    <property type="term" value="C:RNA polymerase II, core complex"/>
    <property type="evidence" value="ECO:0000318"/>
    <property type="project" value="GO_Central"/>
</dbReference>
<dbReference type="GO" id="GO:0003677">
    <property type="term" value="F:DNA binding"/>
    <property type="evidence" value="ECO:0007669"/>
    <property type="project" value="UniProtKB-KW"/>
</dbReference>
<dbReference type="GO" id="GO:0003899">
    <property type="term" value="F:DNA-directed RNA polymerase activity"/>
    <property type="evidence" value="ECO:0000250"/>
    <property type="project" value="WormBase"/>
</dbReference>
<dbReference type="GO" id="GO:0046872">
    <property type="term" value="F:metal ion binding"/>
    <property type="evidence" value="ECO:0007669"/>
    <property type="project" value="UniProtKB-KW"/>
</dbReference>
<dbReference type="GO" id="GO:0006351">
    <property type="term" value="P:DNA-templated transcription"/>
    <property type="evidence" value="ECO:0000315"/>
    <property type="project" value="WormBase"/>
</dbReference>
<dbReference type="GO" id="GO:0009792">
    <property type="term" value="P:embryo development ending in birth or egg hatching"/>
    <property type="evidence" value="ECO:0000315"/>
    <property type="project" value="WormBase"/>
</dbReference>
<dbReference type="GO" id="GO:0007369">
    <property type="term" value="P:gastrulation"/>
    <property type="evidence" value="ECO:0000315"/>
    <property type="project" value="WormBase"/>
</dbReference>
<dbReference type="GO" id="GO:0042789">
    <property type="term" value="P:mRNA transcription by RNA polymerase II"/>
    <property type="evidence" value="ECO:0000315"/>
    <property type="project" value="WormBase"/>
</dbReference>
<dbReference type="GO" id="GO:0006366">
    <property type="term" value="P:transcription by RNA polymerase II"/>
    <property type="evidence" value="ECO:0000315"/>
    <property type="project" value="UniProtKB"/>
</dbReference>
<dbReference type="CDD" id="cd02584">
    <property type="entry name" value="RNAP_II_Rpb1_C"/>
    <property type="match status" value="1"/>
</dbReference>
<dbReference type="CDD" id="cd02733">
    <property type="entry name" value="RNAP_II_RPB1_N"/>
    <property type="match status" value="1"/>
</dbReference>
<dbReference type="FunFam" id="2.40.40.20:FF:000019">
    <property type="entry name" value="DNA-directed RNA polymerase II subunit RPB1"/>
    <property type="match status" value="1"/>
</dbReference>
<dbReference type="FunFam" id="1.10.132.30:FF:000001">
    <property type="entry name" value="DNA-directed RNA polymerase subunit"/>
    <property type="match status" value="1"/>
</dbReference>
<dbReference type="FunFam" id="1.10.150.390:FF:000001">
    <property type="entry name" value="DNA-directed RNA polymerase subunit"/>
    <property type="match status" value="1"/>
</dbReference>
<dbReference type="FunFam" id="1.10.274.100:FF:000001">
    <property type="entry name" value="DNA-directed RNA polymerase subunit"/>
    <property type="match status" value="1"/>
</dbReference>
<dbReference type="FunFam" id="3.30.1360.140:FF:000001">
    <property type="entry name" value="DNA-directed RNA polymerase subunit"/>
    <property type="match status" value="1"/>
</dbReference>
<dbReference type="FunFam" id="3.30.1490.180:FF:000001">
    <property type="entry name" value="DNA-directed RNA polymerase subunit"/>
    <property type="match status" value="1"/>
</dbReference>
<dbReference type="FunFam" id="4.10.860.120:FF:000005">
    <property type="entry name" value="DNA-directed RNA polymerase subunit"/>
    <property type="match status" value="1"/>
</dbReference>
<dbReference type="Gene3D" id="1.10.132.30">
    <property type="match status" value="1"/>
</dbReference>
<dbReference type="Gene3D" id="1.10.150.390">
    <property type="match status" value="1"/>
</dbReference>
<dbReference type="Gene3D" id="2.40.40.20">
    <property type="match status" value="1"/>
</dbReference>
<dbReference type="Gene3D" id="3.30.1360.140">
    <property type="match status" value="1"/>
</dbReference>
<dbReference type="Gene3D" id="6.10.250.2940">
    <property type="match status" value="1"/>
</dbReference>
<dbReference type="Gene3D" id="6.20.50.80">
    <property type="match status" value="1"/>
</dbReference>
<dbReference type="Gene3D" id="3.30.1490.180">
    <property type="entry name" value="RNA polymerase ii"/>
    <property type="match status" value="1"/>
</dbReference>
<dbReference type="Gene3D" id="4.10.860.120">
    <property type="entry name" value="RNA polymerase II, clamp domain"/>
    <property type="match status" value="2"/>
</dbReference>
<dbReference type="Gene3D" id="1.10.274.100">
    <property type="entry name" value="RNA polymerase Rpb1, domain 3"/>
    <property type="match status" value="1"/>
</dbReference>
<dbReference type="InterPro" id="IPR045867">
    <property type="entry name" value="DNA-dir_RpoC_beta_prime"/>
</dbReference>
<dbReference type="InterPro" id="IPR000722">
    <property type="entry name" value="RNA_pol_asu"/>
</dbReference>
<dbReference type="InterPro" id="IPR000684">
    <property type="entry name" value="RNA_pol_II_repeat_euk"/>
</dbReference>
<dbReference type="InterPro" id="IPR006592">
    <property type="entry name" value="RNA_pol_N"/>
</dbReference>
<dbReference type="InterPro" id="IPR007080">
    <property type="entry name" value="RNA_pol_Rpb1_1"/>
</dbReference>
<dbReference type="InterPro" id="IPR007066">
    <property type="entry name" value="RNA_pol_Rpb1_3"/>
</dbReference>
<dbReference type="InterPro" id="IPR042102">
    <property type="entry name" value="RNA_pol_Rpb1_3_sf"/>
</dbReference>
<dbReference type="InterPro" id="IPR007083">
    <property type="entry name" value="RNA_pol_Rpb1_4"/>
</dbReference>
<dbReference type="InterPro" id="IPR007081">
    <property type="entry name" value="RNA_pol_Rpb1_5"/>
</dbReference>
<dbReference type="InterPro" id="IPR007075">
    <property type="entry name" value="RNA_pol_Rpb1_6"/>
</dbReference>
<dbReference type="InterPro" id="IPR007073">
    <property type="entry name" value="RNA_pol_Rpb1_7"/>
</dbReference>
<dbReference type="InterPro" id="IPR038593">
    <property type="entry name" value="RNA_pol_Rpb1_7_sf"/>
</dbReference>
<dbReference type="InterPro" id="IPR044893">
    <property type="entry name" value="RNA_pol_Rpb1_clamp_domain"/>
</dbReference>
<dbReference type="InterPro" id="IPR038120">
    <property type="entry name" value="Rpb1_funnel_sf"/>
</dbReference>
<dbReference type="NCBIfam" id="NF006336">
    <property type="entry name" value="PRK08566.1"/>
    <property type="match status" value="1"/>
</dbReference>
<dbReference type="PANTHER" id="PTHR19376">
    <property type="entry name" value="DNA-DIRECTED RNA POLYMERASE"/>
    <property type="match status" value="1"/>
</dbReference>
<dbReference type="PANTHER" id="PTHR19376:SF37">
    <property type="entry name" value="DNA-DIRECTED RNA POLYMERASE II SUBUNIT RPB1"/>
    <property type="match status" value="1"/>
</dbReference>
<dbReference type="Pfam" id="PF04997">
    <property type="entry name" value="RNA_pol_Rpb1_1"/>
    <property type="match status" value="1"/>
</dbReference>
<dbReference type="Pfam" id="PF00623">
    <property type="entry name" value="RNA_pol_Rpb1_2"/>
    <property type="match status" value="1"/>
</dbReference>
<dbReference type="Pfam" id="PF04983">
    <property type="entry name" value="RNA_pol_Rpb1_3"/>
    <property type="match status" value="1"/>
</dbReference>
<dbReference type="Pfam" id="PF05000">
    <property type="entry name" value="RNA_pol_Rpb1_4"/>
    <property type="match status" value="1"/>
</dbReference>
<dbReference type="Pfam" id="PF04998">
    <property type="entry name" value="RNA_pol_Rpb1_5"/>
    <property type="match status" value="1"/>
</dbReference>
<dbReference type="Pfam" id="PF04992">
    <property type="entry name" value="RNA_pol_Rpb1_6"/>
    <property type="match status" value="1"/>
</dbReference>
<dbReference type="Pfam" id="PF04990">
    <property type="entry name" value="RNA_pol_Rpb1_7"/>
    <property type="match status" value="1"/>
</dbReference>
<dbReference type="Pfam" id="PF05001">
    <property type="entry name" value="RNA_pol_Rpb1_R"/>
    <property type="match status" value="20"/>
</dbReference>
<dbReference type="PRINTS" id="PR01217">
    <property type="entry name" value="PRICHEXTENSN"/>
</dbReference>
<dbReference type="SMART" id="SM00663">
    <property type="entry name" value="RPOLA_N"/>
    <property type="match status" value="1"/>
</dbReference>
<dbReference type="SUPFAM" id="SSF64484">
    <property type="entry name" value="beta and beta-prime subunits of DNA dependent RNA-polymerase"/>
    <property type="match status" value="1"/>
</dbReference>
<dbReference type="PROSITE" id="PS00115">
    <property type="entry name" value="RNA_POL_II_REPEAT"/>
    <property type="match status" value="26"/>
</dbReference>
<organism>
    <name type="scientific">Caenorhabditis elegans</name>
    <dbReference type="NCBI Taxonomy" id="6239"/>
    <lineage>
        <taxon>Eukaryota</taxon>
        <taxon>Metazoa</taxon>
        <taxon>Ecdysozoa</taxon>
        <taxon>Nematoda</taxon>
        <taxon>Chromadorea</taxon>
        <taxon>Rhabditida</taxon>
        <taxon>Rhabditina</taxon>
        <taxon>Rhabditomorpha</taxon>
        <taxon>Rhabditoidea</taxon>
        <taxon>Rhabditidae</taxon>
        <taxon>Peloderinae</taxon>
        <taxon>Caenorhabditis</taxon>
    </lineage>
</organism>
<reference key="1">
    <citation type="journal article" date="1989" name="Mol. Cell. Biol.">
        <title>Molecular cloning and sequencing of ama-1, the gene encoding the largest subunit of Caenorhabditis elegans RNA polymerase II.</title>
        <authorList>
            <person name="Bird D.M."/>
            <person name="Riddle D.L."/>
        </authorList>
    </citation>
    <scope>NUCLEOTIDE SEQUENCE [MRNA]</scope>
    <source>
        <strain>Bristol N2</strain>
    </source>
</reference>
<reference key="2">
    <citation type="journal article" date="1998" name="Science">
        <title>Genome sequence of the nematode C. elegans: a platform for investigating biology.</title>
        <authorList>
            <consortium name="The C. elegans sequencing consortium"/>
        </authorList>
    </citation>
    <scope>NUCLEOTIDE SEQUENCE [LARGE SCALE GENOMIC DNA]</scope>
    <source>
        <strain>Bristol N2</strain>
    </source>
</reference>
<reference key="3">
    <citation type="journal article" date="2002" name="Proc. Natl. Acad. Sci. U.S.A.">
        <title>cdk-7 is required for mRNA transcription and cell cycle progression in Caenorhabditis elegans embryos.</title>
        <authorList>
            <person name="Wallenfang M.R."/>
            <person name="Seydoux G."/>
        </authorList>
    </citation>
    <scope>PHOSPHORYLATION</scope>
</reference>
<reference key="4">
    <citation type="journal article" date="2004" name="J. Biol. Chem.">
        <title>An extensive requirement for transcription factor IID-specific TAF-1 in Caenorhabditis elegans embryonic transcription.</title>
        <authorList>
            <person name="Walker A.K."/>
            <person name="Shi Y."/>
            <person name="Blackwell T.K."/>
        </authorList>
    </citation>
    <scope>FUNCTION</scope>
    <scope>SUBCELLULAR LOCATION</scope>
    <scope>DEVELOPMENTAL STAGE</scope>
    <scope>PHOSPHORYLATION</scope>
    <scope>DISRUPTION PHENOTYPE</scope>
</reference>
<reference key="5">
    <citation type="journal article" date="2007" name="Dev. Biol.">
        <title>Transcription reactivation steps stimulated by oocyte maturation in C. elegans.</title>
        <authorList>
            <person name="Walker A.K."/>
            <person name="Boag P.R."/>
            <person name="Blackwell T.K."/>
        </authorList>
    </citation>
    <scope>SUBCELLULAR LOCATION</scope>
    <scope>PHOSPHORYLATION</scope>
</reference>
<reference key="6">
    <citation type="journal article" date="2013" name="Development">
        <title>Phosphorylation of RNA polymerase II is independent of P-TEFb in the C. elegans germline.</title>
        <authorList>
            <person name="Bowman E.A."/>
            <person name="Bowman C.R."/>
            <person name="Ahn J.H."/>
            <person name="Kelly W.G."/>
        </authorList>
    </citation>
    <scope>SUBCELLULAR LOCATION</scope>
    <scope>PHOSPHORYLATION</scope>
</reference>
<reference key="7">
    <citation type="journal article" date="2015" name="Genes Dev.">
        <title>Context-dependent modulation of Pol II CTD phosphatase SSUP-72 regulates alternative polyadenylation in neuronal development.</title>
        <authorList>
            <person name="Chen F."/>
            <person name="Zhou Y."/>
            <person name="Qi Y.B."/>
            <person name="Khivansara V."/>
            <person name="Li H."/>
            <person name="Chun S.Y."/>
            <person name="Kim J.K."/>
            <person name="Fu X.D."/>
            <person name="Jin Y."/>
        </authorList>
    </citation>
    <scope>DEPHOSPHORYLATION BY SSUP-72</scope>
</reference>
<reference key="8">
    <citation type="journal article" date="2016" name="PLoS Genet.">
        <title>A conserved nuclear cyclophilin is required for both RNA polymerase II elongation and co-transcriptional splicing in Caenorhabditis elegans.</title>
        <authorList>
            <person name="Ahn J.H."/>
            <person name="Rechsteiner A."/>
            <person name="Strome S."/>
            <person name="Kelly W.G."/>
        </authorList>
    </citation>
    <scope>FUNCTION</scope>
    <scope>INTERACTION WITH SIG-7</scope>
    <scope>SUBCELLULAR LOCATION</scope>
    <scope>DISRUPTION PHENOTYPE</scope>
</reference>
<sequence length="1856" mass="204525">MALVGVDFQAPLRIVSRVQFGILGPEEIKRMSVAHVEFPEVYENGKPKLGGLMDPRQGVIDRRGRCMTCAGNLTDCPGHFGHLELAKPVFHIGFLTKTLKILRCVCFYCGRLLIDKSAPRVLEILKKTGTNSKKRLTMIYDLCKAKSVCEGAAEKEEGMPDDPDDPMNDGKKVAGGCGRYQPSYRRVGIDINAEWKKNVNEDTQERKIMLTAERVLEVFQQITDEDILVIGMDPQFARPEWMICTVLPVPPLAVRPAVVTFGSAKNQDDLTHKLSDIIKTNQQLQRNEANGAAAHVLTDDVRLLQFHVATLVDNCIPGLPTATQKGGRPLKSIKQRLKGKEGRIRGNLMGKRVDFSARTVITADPNLPIDTVGVPRTIAQNLTFPEIVTPFNVDKLQELVNRGDTQYPGAKYIIRENGARVDLRYHPRAADLHLQPGYRVERHMKDGDIIVFNRQPTLHKMSMMGHRVKILPWSTFRMNLSVTSPYNADFDGDEMNLHLPQSLETRAEIEEIAMVPRQLITPQANKPVMGIVQDTLCAVRMMTKRDVFIDWPFMMDLLMYLPTWDGKVPQPAILKPKPLWTGKQVFSLIIPGNVNVLRTHSTHPDSEDSGPYKWISPGDTKVIIEHGELLSGIVCSKTVGKSAGNLLHVVTLELGYEIAANFYSHIQTVINAWLIREGHTIGIGDTIADQATYLDIQNTIRKAKQDVVDVIEKAHNDDLEPTPGNTLRQTFENKVNQILNDARDRTGSSAQKSLSEFNNFKSMVVSGSKGSKINISQVIACVGQQNVEGKRIPFGFRHRTLPHFIKDDYGPESKGFVENSYLAGLTPSEFFFHAMGGREGLIDTAVKTAETGYIQRRLIKAMESVMVNYDGTVRNSLAQMVQLRYGEDGLDGMWVENQNMPTMKPNNAVFERDFRMDLTDNKFLRKNYSEDVVREIQESEDGISLVESEWSQLEEDRRLLRKIFPRGDAKIVLPCNLQRLIWNAQKIFKVDLRKPVNLSPLHVISGVRELSKKLIIVSGNDEISKQAQYNATLLMNILLRSTLCTKNMCTKSKLNSEAFDWLLGEIESRFQQAIAQPGEMVGALAAQSLGEPATQMTLNTFHYAGVSAKNVTLGVPRLKEIINVSKTLKTPSLTVFLTGAAAKDPEKAKDVLCKLEHTTLKKVTCNTAIYYDPDPKNTVIAEDEEWVSIFYEMPDHDLSRTSPWLLRIELDRKRMVDKKLTMEMIADRIHGGFGNDVHTIYTDDNAEKLVFRLRIAGEDKGEAQEEQVDKMEDDVFLRCIEANMLSDLTLQGIPAISKVYMNQPNTDDKKRIIITPEGGFKSVADWILETDGTALLRVLSERQIDPVRTTSNDICEIFEVLGIEAVRKAIEREMDNVISFDGSYVNYRHLALLCDVMTAKGHLMAITRHGINRQEVGALMRCSFEETVDILMEAAVHAEEDPVKGVSENIMLGQLARCGTGCFDLVLDVEKCKYGMEIPQNVVMGGGFYGSFAGSPSNREFSPAHSPWNSGVTPTYAGAAWSPTTGGMSPGAGFSPAGNTDGGASPFNEGGWSPASPGDPLGALSPRTPSYGGMSPGVYSPSSPQFSMTSPHYSPTSPSYSPTSPAAGQSPVSPSYSPTSPSYSPTSPSYSPTSPSYSPTSPSYSPTSPSYSPTSPSYSPSSPSYSPSSPSYSPSSPRYSPTSPTYSPTSPTYSPTSPTYSPTSPTYSPTSPSYESGGGYSPSSPKYSPSSPTYSPTSPSYSPTSPQYSPTSPQYSPSSPTYTPSSPTYNPTSPRGFSSPQYSPTSPTYSPTSPSYTPSSPQYSPTSPTYTPSPSEQPGTSAQYSPTSPTYSPSSPTYSPASPSYSPSSPTYDPNS</sequence>
<comment type="function">
    <text evidence="2 4 8">DNA-dependent RNA polymerase catalyzes the transcription of DNA into RNA using the four ribonucleoside triphosphates as substrates. Largest and catalytic component of RNA polymerase II which synthesizes mRNA precursors and many functional non-coding RNAs. Forms the polymerase active center together with the second largest subunit. Pol II is the central component of the basal RNA polymerase II transcription machinery. It is composed of mobile elements that move relative to each other. RPB1 is part of the core element with the central large cleft, the clamp element that moves to open and close the cleft and the jaws that are thought to grab the incoming DNA template. At the start of transcription, a single-stranded DNA template strand of the promoter is positioned within the central active site cleft of Pol II. A bridging helix emanates from RPB1 and crosses the cleft near the catalytic site and is thought to promote translocation of Pol II by acting as a ratchet that moves the RNA-DNA hybrid through the active site by switching from straight to bent conformations at each step of nucleotide addition. During transcription elongation, Pol II moves on the template as the transcript elongates. Elongation is influenced by the phosphorylation status of the C-terminal domain (CTD) of Pol II largest subunit (RPB1), which serves as a platform for assembly of factors that regulate transcription initiation, elongation, termination and mRNA processing (By similarity). Involved in the transcription of several genes including those involved in embryogenesis (PubMed:14726532, PubMed:27541139).</text>
</comment>
<comment type="catalytic activity">
    <reaction>
        <text>RNA(n) + a ribonucleoside 5'-triphosphate = RNA(n+1) + diphosphate</text>
        <dbReference type="Rhea" id="RHEA:21248"/>
        <dbReference type="Rhea" id="RHEA-COMP:14527"/>
        <dbReference type="Rhea" id="RHEA-COMP:17342"/>
        <dbReference type="ChEBI" id="CHEBI:33019"/>
        <dbReference type="ChEBI" id="CHEBI:61557"/>
        <dbReference type="ChEBI" id="CHEBI:140395"/>
        <dbReference type="EC" id="2.7.7.6"/>
    </reaction>
</comment>
<comment type="subunit">
    <text evidence="2 8">Component of the RNA polymerase II (Pol II) complex consisting of 12 subunits (By similarity). Interacts with sig-7 (PubMed:27541139).</text>
</comment>
<comment type="interaction">
    <interactant intactId="EBI-1533906">
        <id>P16356</id>
    </interactant>
    <interactant intactId="EBI-1533827">
        <id>Q9N337</id>
        <label>mdt-6</label>
    </interactant>
    <organismsDiffer>false</organismsDiffer>
    <experiments>2</experiments>
</comment>
<comment type="subcellular location">
    <subcellularLocation>
        <location evidence="4 5 6">Nucleus</location>
    </subcellularLocation>
    <subcellularLocation>
        <location evidence="8">Chromosome</location>
    </subcellularLocation>
    <text evidence="4 5 6 8">Localizes to punctate nucleoplasmic structures in the nuclei of interphase somatic cells when phosphorylated at 'Ser-5' of the C-terminal heptapeptide repeat (PubMed:14726532). A similar localization occurs in early developing oocytes when phosphorylated at 'Ser-2' and 'Ser-5' of the C-terminal heptapeptide repeat (PubMed:17291483). Localizes to the nucleus of embryonic somatic and germline cells when phosphorylated at 'Ser-2' of the C-terminal heptapeptide repeat (PubMed:23903194). Localizes to two discrete foci in the transcriptionally silent germ line nucleus (PubMed:14726532, PubMed:17291483). Co-localizes with transcriptionally active chromatin in all autosomes of mitotic and meiotic nuclei in germ cells (PubMed:27541139).</text>
</comment>
<comment type="developmental stage">
    <text evidence="4">Expressed in embryo. During embryonic development, the form phosphorylated at 'Ser-2' of the C-terminal heptapeptide repeats is present only in transcriptionally active somatic cells.</text>
</comment>
<comment type="domain">
    <text evidence="10">The C-terminal domain (CTD) serves as a platform for assembly of factors that regulate transcription initiation, elongation, termination and mRNA processing.</text>
</comment>
<comment type="PTM">
    <text evidence="2 4 5 6 7 9">The tandem 7 residues repeats in the C-terminal domain (CTD) can be highly phosphorylated. The phosphorylation activates Pol II (By similarity). Phosphorylation occurs mainly at residues 'Ser-2' and 'Ser-5' of the heptapeptide repeat and starts at the 3- to 4-cell embryonic stage (PubMed:14726532, PubMed:17291483). This phosphorylation also occurs in the early stages of oocyte development and is not detected in oocytes arrested at the meiotic diakinesis stage (PubMed:17291483). In the somatic lineage, phosphorylation at 'Ser-2' is mediated by cdk-12 downstream of cdk-9 whereas in the germline lineage cdk-12 phosphorylates 'Ser-2' independently of cdk-9 (PubMed:23903194). Phosphorylation is likely mediated by cdk-7 (PubMed:11960010). May be dephosphorylated by fcp-1 in diakinetic oocytes and in 1-cell and 2-cell embryos (PubMed:17291483). Dephosphorylated at 'Ser-5' of the heptapeptide repeats by ssup-72 (PubMed:26588990). The phosphorylation state is believed to result from the balanced action of site-specific CTD kinases and phosphatase, and a 'CTD code' that specifies the position of Pol II within the transcription cycle has been proposed (By similarity).</text>
</comment>
<comment type="PTM">
    <text evidence="1">Following transcription stress, the elongating form of RNA polymerase II (RNA pol IIo) is polyubiquitinated via 'Lys-63'-linkages on Lys-1260 at DNA damage sites without leading to degradation: ubiquitination promotes RNA pol IIo backtracking to allow access by the transcription-coupled nucleotide excision repair (TC-NER) machinery. Subsequent DEF1-dependent polyubiquitination by the elongin complex via 'Lys-48'-linkages may lead to proteasome-mediated degradation; presumably at stalled RNA pol II where TC-NER has failed, to halt global transcription and enable 'last resort' DNA repair pathways.</text>
</comment>
<comment type="disruption phenotype">
    <text evidence="4 8">RNAi-mediated knockdown results in embryonic arrest at the 100-cell stage and prevents the embryonic transcription of several genes (PubMed:14726532). Surviving embryos exhibit gastrulation defects with decreased expression of genes involved in gastrulation (PubMed:27541139).</text>
</comment>
<comment type="miscellaneous">
    <text>The binding of ribonucleoside triphosphate to the RNA polymerase II transcribing complex probably involves a two-step mechanism. The initial binding seems to occur at the entry (E) site and involves a magnesium ion temporarily coordinated by three conserved aspartate residues of the two largest RNA Pol II subunits. The ribonucleoside triphosphate is transferred by a rotation to the nucleotide addition (A) site for pairing with the template DNA. The catalytic A site involves three conserved aspartate residues of the RNA Pol II largest subunit which permanently coordinate a second magnesium ion.</text>
</comment>
<comment type="similarity">
    <text evidence="10">Belongs to the RNA polymerase beta' chain family.</text>
</comment>
<proteinExistence type="evidence at protein level"/>
<protein>
    <recommendedName>
        <fullName>DNA-directed RNA polymerase II subunit RPB1</fullName>
        <shortName>RNA polymerase II subunit B1</shortName>
        <ecNumber>2.7.7.6</ecNumber>
    </recommendedName>
    <alternativeName>
        <fullName>DNA-directed RNA polymerase III largest subunit</fullName>
    </alternativeName>
</protein>
<keyword id="KW-0158">Chromosome</keyword>
<keyword id="KW-0238">DNA-binding</keyword>
<keyword id="KW-0240">DNA-directed RNA polymerase</keyword>
<keyword id="KW-1017">Isopeptide bond</keyword>
<keyword id="KW-0460">Magnesium</keyword>
<keyword id="KW-0479">Metal-binding</keyword>
<keyword id="KW-0548">Nucleotidyltransferase</keyword>
<keyword id="KW-0539">Nucleus</keyword>
<keyword id="KW-0597">Phosphoprotein</keyword>
<keyword id="KW-1185">Reference proteome</keyword>
<keyword id="KW-0677">Repeat</keyword>
<keyword id="KW-0804">Transcription</keyword>
<keyword id="KW-0808">Transferase</keyword>
<keyword id="KW-0832">Ubl conjugation</keyword>
<keyword id="KW-0862">Zinc</keyword>
<name>RPB1_CAEEL</name>